<gene>
    <name evidence="1" type="primary">grpE</name>
    <name type="ordered locus">P9301_00151</name>
</gene>
<sequence>MIENQSDNIDNKEIDVSIQDNAPEDKSSMQNSTTENDELSSQKTEEINTEELKNTISNNDARLEQLEKEHETLKNQYVRISADFDNFRKRQSRDQDDLKIQLVSKTLTAILPIVDNFERARQQLKPESEEAQALHRSYQGLYKQLVEVLKQQGVSPMRVVGQQFDPNLHEAVLREPSEEFEEDFIIEELQRGYHLEGKVLRHALAKVSMGPGKQKSQQEVEKDTVEGDVDSDANTSEDV</sequence>
<feature type="chain" id="PRO_1000053613" description="Protein GrpE">
    <location>
        <begin position="1"/>
        <end position="239"/>
    </location>
</feature>
<feature type="region of interest" description="Disordered" evidence="2">
    <location>
        <begin position="1"/>
        <end position="60"/>
    </location>
</feature>
<feature type="region of interest" description="Disordered" evidence="2">
    <location>
        <begin position="208"/>
        <end position="239"/>
    </location>
</feature>
<feature type="compositionally biased region" description="Polar residues" evidence="2">
    <location>
        <begin position="28"/>
        <end position="42"/>
    </location>
</feature>
<feature type="compositionally biased region" description="Basic and acidic residues" evidence="2">
    <location>
        <begin position="43"/>
        <end position="53"/>
    </location>
</feature>
<feature type="compositionally biased region" description="Basic and acidic residues" evidence="2">
    <location>
        <begin position="216"/>
        <end position="225"/>
    </location>
</feature>
<feature type="compositionally biased region" description="Acidic residues" evidence="2">
    <location>
        <begin position="226"/>
        <end position="239"/>
    </location>
</feature>
<organism>
    <name type="scientific">Prochlorococcus marinus (strain MIT 9301)</name>
    <dbReference type="NCBI Taxonomy" id="167546"/>
    <lineage>
        <taxon>Bacteria</taxon>
        <taxon>Bacillati</taxon>
        <taxon>Cyanobacteriota</taxon>
        <taxon>Cyanophyceae</taxon>
        <taxon>Synechococcales</taxon>
        <taxon>Prochlorococcaceae</taxon>
        <taxon>Prochlorococcus</taxon>
    </lineage>
</organism>
<protein>
    <recommendedName>
        <fullName evidence="1">Protein GrpE</fullName>
    </recommendedName>
    <alternativeName>
        <fullName evidence="1">HSP-70 cofactor</fullName>
    </alternativeName>
</protein>
<keyword id="KW-0143">Chaperone</keyword>
<keyword id="KW-0963">Cytoplasm</keyword>
<keyword id="KW-1185">Reference proteome</keyword>
<keyword id="KW-0346">Stress response</keyword>
<dbReference type="EMBL" id="CP000576">
    <property type="protein sequence ID" value="ABO16638.1"/>
    <property type="molecule type" value="Genomic_DNA"/>
</dbReference>
<dbReference type="RefSeq" id="WP_011862043.1">
    <property type="nucleotide sequence ID" value="NC_009091.1"/>
</dbReference>
<dbReference type="SMR" id="A3PA63"/>
<dbReference type="STRING" id="167546.P9301_00151"/>
<dbReference type="KEGG" id="pmg:P9301_00151"/>
<dbReference type="eggNOG" id="COG0576">
    <property type="taxonomic scope" value="Bacteria"/>
</dbReference>
<dbReference type="HOGENOM" id="CLU_057217_5_1_3"/>
<dbReference type="OrthoDB" id="9812586at2"/>
<dbReference type="Proteomes" id="UP000001430">
    <property type="component" value="Chromosome"/>
</dbReference>
<dbReference type="GO" id="GO:0005737">
    <property type="term" value="C:cytoplasm"/>
    <property type="evidence" value="ECO:0007669"/>
    <property type="project" value="UniProtKB-SubCell"/>
</dbReference>
<dbReference type="GO" id="GO:0000774">
    <property type="term" value="F:adenyl-nucleotide exchange factor activity"/>
    <property type="evidence" value="ECO:0007669"/>
    <property type="project" value="InterPro"/>
</dbReference>
<dbReference type="GO" id="GO:0042803">
    <property type="term" value="F:protein homodimerization activity"/>
    <property type="evidence" value="ECO:0007669"/>
    <property type="project" value="InterPro"/>
</dbReference>
<dbReference type="GO" id="GO:0051087">
    <property type="term" value="F:protein-folding chaperone binding"/>
    <property type="evidence" value="ECO:0007669"/>
    <property type="project" value="InterPro"/>
</dbReference>
<dbReference type="GO" id="GO:0051082">
    <property type="term" value="F:unfolded protein binding"/>
    <property type="evidence" value="ECO:0007669"/>
    <property type="project" value="TreeGrafter"/>
</dbReference>
<dbReference type="GO" id="GO:0006457">
    <property type="term" value="P:protein folding"/>
    <property type="evidence" value="ECO:0007669"/>
    <property type="project" value="InterPro"/>
</dbReference>
<dbReference type="CDD" id="cd00446">
    <property type="entry name" value="GrpE"/>
    <property type="match status" value="1"/>
</dbReference>
<dbReference type="Gene3D" id="3.90.20.20">
    <property type="match status" value="1"/>
</dbReference>
<dbReference type="Gene3D" id="2.30.22.10">
    <property type="entry name" value="Head domain of nucleotide exchange factor GrpE"/>
    <property type="match status" value="1"/>
</dbReference>
<dbReference type="HAMAP" id="MF_01151">
    <property type="entry name" value="GrpE"/>
    <property type="match status" value="1"/>
</dbReference>
<dbReference type="InterPro" id="IPR000740">
    <property type="entry name" value="GrpE"/>
</dbReference>
<dbReference type="InterPro" id="IPR013805">
    <property type="entry name" value="GrpE_coiled_coil"/>
</dbReference>
<dbReference type="InterPro" id="IPR009012">
    <property type="entry name" value="GrpE_head"/>
</dbReference>
<dbReference type="NCBIfam" id="NF010738">
    <property type="entry name" value="PRK14140.1"/>
    <property type="match status" value="1"/>
</dbReference>
<dbReference type="NCBIfam" id="NF010741">
    <property type="entry name" value="PRK14143.1"/>
    <property type="match status" value="1"/>
</dbReference>
<dbReference type="PANTHER" id="PTHR21237">
    <property type="entry name" value="GRPE PROTEIN"/>
    <property type="match status" value="1"/>
</dbReference>
<dbReference type="PANTHER" id="PTHR21237:SF23">
    <property type="entry name" value="GRPE PROTEIN HOMOLOG, MITOCHONDRIAL"/>
    <property type="match status" value="1"/>
</dbReference>
<dbReference type="Pfam" id="PF01025">
    <property type="entry name" value="GrpE"/>
    <property type="match status" value="1"/>
</dbReference>
<dbReference type="PRINTS" id="PR00773">
    <property type="entry name" value="GRPEPROTEIN"/>
</dbReference>
<dbReference type="SUPFAM" id="SSF58014">
    <property type="entry name" value="Coiled-coil domain of nucleotide exchange factor GrpE"/>
    <property type="match status" value="1"/>
</dbReference>
<dbReference type="SUPFAM" id="SSF51064">
    <property type="entry name" value="Head domain of nucleotide exchange factor GrpE"/>
    <property type="match status" value="1"/>
</dbReference>
<proteinExistence type="inferred from homology"/>
<accession>A3PA63</accession>
<name>GRPE_PROM0</name>
<comment type="function">
    <text evidence="1">Participates actively in the response to hyperosmotic and heat shock by preventing the aggregation of stress-denatured proteins, in association with DnaK and GrpE. It is the nucleotide exchange factor for DnaK and may function as a thermosensor. Unfolded proteins bind initially to DnaJ; upon interaction with the DnaJ-bound protein, DnaK hydrolyzes its bound ATP, resulting in the formation of a stable complex. GrpE releases ADP from DnaK; ATP binding to DnaK triggers the release of the substrate protein, thus completing the reaction cycle. Several rounds of ATP-dependent interactions between DnaJ, DnaK and GrpE are required for fully efficient folding.</text>
</comment>
<comment type="subunit">
    <text evidence="1">Homodimer.</text>
</comment>
<comment type="subcellular location">
    <subcellularLocation>
        <location evidence="1">Cytoplasm</location>
    </subcellularLocation>
</comment>
<comment type="similarity">
    <text evidence="1">Belongs to the GrpE family.</text>
</comment>
<evidence type="ECO:0000255" key="1">
    <source>
        <dbReference type="HAMAP-Rule" id="MF_01151"/>
    </source>
</evidence>
<evidence type="ECO:0000256" key="2">
    <source>
        <dbReference type="SAM" id="MobiDB-lite"/>
    </source>
</evidence>
<reference key="1">
    <citation type="journal article" date="2007" name="PLoS Genet.">
        <title>Patterns and implications of gene gain and loss in the evolution of Prochlorococcus.</title>
        <authorList>
            <person name="Kettler G.C."/>
            <person name="Martiny A.C."/>
            <person name="Huang K."/>
            <person name="Zucker J."/>
            <person name="Coleman M.L."/>
            <person name="Rodrigue S."/>
            <person name="Chen F."/>
            <person name="Lapidus A."/>
            <person name="Ferriera S."/>
            <person name="Johnson J."/>
            <person name="Steglich C."/>
            <person name="Church G.M."/>
            <person name="Richardson P."/>
            <person name="Chisholm S.W."/>
        </authorList>
    </citation>
    <scope>NUCLEOTIDE SEQUENCE [LARGE SCALE GENOMIC DNA]</scope>
    <source>
        <strain>MIT 9301</strain>
    </source>
</reference>